<gene>
    <name type="primary">yxkH</name>
    <name type="ordered locus">BSU38800</name>
</gene>
<dbReference type="EC" id="3.-.-.-"/>
<dbReference type="EMBL" id="D83026">
    <property type="protein sequence ID" value="BAA11724.1"/>
    <property type="molecule type" value="Genomic_DNA"/>
</dbReference>
<dbReference type="EMBL" id="AL009126">
    <property type="protein sequence ID" value="CAB15906.1"/>
    <property type="molecule type" value="Genomic_DNA"/>
</dbReference>
<dbReference type="PIR" id="A70081">
    <property type="entry name" value="A70081"/>
</dbReference>
<dbReference type="RefSeq" id="NP_391759.1">
    <property type="nucleotide sequence ID" value="NC_000964.3"/>
</dbReference>
<dbReference type="RefSeq" id="WP_003244194.1">
    <property type="nucleotide sequence ID" value="NZ_OZ025638.1"/>
</dbReference>
<dbReference type="SMR" id="P94361"/>
<dbReference type="FunCoup" id="P94361">
    <property type="interactions" value="84"/>
</dbReference>
<dbReference type="STRING" id="224308.BSU38800"/>
<dbReference type="PaxDb" id="224308-BSU38800"/>
<dbReference type="DNASU" id="937411"/>
<dbReference type="EnsemblBacteria" id="CAB15906">
    <property type="protein sequence ID" value="CAB15906"/>
    <property type="gene ID" value="BSU_38800"/>
</dbReference>
<dbReference type="GeneID" id="937411"/>
<dbReference type="KEGG" id="bsu:BSU38800"/>
<dbReference type="PATRIC" id="fig|224308.179.peg.4199"/>
<dbReference type="eggNOG" id="COG0726">
    <property type="taxonomic scope" value="Bacteria"/>
</dbReference>
<dbReference type="InParanoid" id="P94361"/>
<dbReference type="OrthoDB" id="9778320at2"/>
<dbReference type="PhylomeDB" id="P94361"/>
<dbReference type="BioCyc" id="BSUB:BSU38800-MONOMER"/>
<dbReference type="Proteomes" id="UP000001570">
    <property type="component" value="Chromosome"/>
</dbReference>
<dbReference type="GO" id="GO:0005886">
    <property type="term" value="C:plasma membrane"/>
    <property type="evidence" value="ECO:0007669"/>
    <property type="project" value="UniProtKB-SubCell"/>
</dbReference>
<dbReference type="GO" id="GO:0016787">
    <property type="term" value="F:hydrolase activity"/>
    <property type="evidence" value="ECO:0000318"/>
    <property type="project" value="GO_Central"/>
</dbReference>
<dbReference type="GO" id="GO:0016810">
    <property type="term" value="F:hydrolase activity, acting on carbon-nitrogen (but not peptide) bonds"/>
    <property type="evidence" value="ECO:0007669"/>
    <property type="project" value="InterPro"/>
</dbReference>
<dbReference type="GO" id="GO:0005975">
    <property type="term" value="P:carbohydrate metabolic process"/>
    <property type="evidence" value="ECO:0007669"/>
    <property type="project" value="InterPro"/>
</dbReference>
<dbReference type="CDD" id="cd10918">
    <property type="entry name" value="CE4_NodB_like_5s_6s"/>
    <property type="match status" value="1"/>
</dbReference>
<dbReference type="Gene3D" id="3.20.20.370">
    <property type="entry name" value="Glycoside hydrolase/deacetylase"/>
    <property type="match status" value="1"/>
</dbReference>
<dbReference type="InterPro" id="IPR011330">
    <property type="entry name" value="Glyco_hydro/deAcase_b/a-brl"/>
</dbReference>
<dbReference type="InterPro" id="IPR002509">
    <property type="entry name" value="NODB_dom"/>
</dbReference>
<dbReference type="InterPro" id="IPR051398">
    <property type="entry name" value="Polysacch_Deacetylase"/>
</dbReference>
<dbReference type="PANTHER" id="PTHR34216">
    <property type="match status" value="1"/>
</dbReference>
<dbReference type="PANTHER" id="PTHR34216:SF3">
    <property type="entry name" value="POLY-BETA-1,6-N-ACETYL-D-GLUCOSAMINE N-DEACETYLASE"/>
    <property type="match status" value="1"/>
</dbReference>
<dbReference type="Pfam" id="PF01522">
    <property type="entry name" value="Polysacc_deac_1"/>
    <property type="match status" value="1"/>
</dbReference>
<dbReference type="SUPFAM" id="SSF88713">
    <property type="entry name" value="Glycoside hydrolase/deacetylase"/>
    <property type="match status" value="1"/>
</dbReference>
<dbReference type="PROSITE" id="PS51677">
    <property type="entry name" value="NODB"/>
    <property type="match status" value="1"/>
</dbReference>
<dbReference type="PROSITE" id="PS51257">
    <property type="entry name" value="PROKAR_LIPOPROTEIN"/>
    <property type="match status" value="1"/>
</dbReference>
<accession>P94361</accession>
<accession>Q794X9</accession>
<keyword id="KW-1003">Cell membrane</keyword>
<keyword id="KW-0378">Hydrolase</keyword>
<keyword id="KW-0449">Lipoprotein</keyword>
<keyword id="KW-0472">Membrane</keyword>
<keyword id="KW-0564">Palmitate</keyword>
<keyword id="KW-1185">Reference proteome</keyword>
<keyword id="KW-0732">Signal</keyword>
<name>YXKH_BACSU</name>
<evidence type="ECO:0000255" key="1">
    <source>
        <dbReference type="PROSITE-ProRule" id="PRU00303"/>
    </source>
</evidence>
<evidence type="ECO:0000255" key="2">
    <source>
        <dbReference type="PROSITE-ProRule" id="PRU01014"/>
    </source>
</evidence>
<evidence type="ECO:0000256" key="3">
    <source>
        <dbReference type="SAM" id="MobiDB-lite"/>
    </source>
</evidence>
<evidence type="ECO:0000305" key="4"/>
<organism>
    <name type="scientific">Bacillus subtilis (strain 168)</name>
    <dbReference type="NCBI Taxonomy" id="224308"/>
    <lineage>
        <taxon>Bacteria</taxon>
        <taxon>Bacillati</taxon>
        <taxon>Bacillota</taxon>
        <taxon>Bacilli</taxon>
        <taxon>Bacillales</taxon>
        <taxon>Bacillaceae</taxon>
        <taxon>Bacillus</taxon>
    </lineage>
</organism>
<proteinExistence type="inferred from homology"/>
<feature type="signal peptide" evidence="1">
    <location>
        <begin position="1"/>
        <end position="19"/>
    </location>
</feature>
<feature type="chain" id="PRO_0000360164" description="Putative polysaccharide deacetylase YxkH">
    <location>
        <begin position="20"/>
        <end position="279"/>
    </location>
</feature>
<feature type="domain" description="NodB homology" evidence="2">
    <location>
        <begin position="119"/>
        <end position="279"/>
    </location>
</feature>
<feature type="region of interest" description="Disordered" evidence="3">
    <location>
        <begin position="29"/>
        <end position="51"/>
    </location>
</feature>
<feature type="compositionally biased region" description="Basic and acidic residues" evidence="3">
    <location>
        <begin position="34"/>
        <end position="51"/>
    </location>
</feature>
<feature type="lipid moiety-binding region" description="N-palmitoyl cysteine" evidence="1">
    <location>
        <position position="20"/>
    </location>
</feature>
<feature type="lipid moiety-binding region" description="S-diacylglycerol cysteine" evidence="1">
    <location>
        <position position="20"/>
    </location>
</feature>
<protein>
    <recommendedName>
        <fullName>Putative polysaccharide deacetylase YxkH</fullName>
        <ecNumber>3.-.-.-</ecNumber>
    </recommendedName>
</protein>
<sequence>MKRLFLSIFLLGSCLALAACADQEANAEQPMPKAEQKKPEKKAVQVQKKEDDTSAWIKTEKPAKLPILMYHSISSGNSLRVPKKEFEAHMKWLHDNGYQTLTPKEASLMLTQDKKPSEKCVLITFDDGYTDNYQDAYPVLKKYGMKATIFMIGKSIGHKHHLTEEQMKEMAQHGISIESHTIDHLELNGLTPQQQQSEMADSKKLFDNMFHQQTTIISYPVGRYNEETLKAAEKTGYQMGVTTEPGAASRDQGMYALHRVRVSPGMSGSAFGAYIESMK</sequence>
<comment type="subcellular location">
    <subcellularLocation>
        <location evidence="1">Cell membrane</location>
        <topology evidence="1">Lipid-anchor</topology>
    </subcellularLocation>
</comment>
<comment type="similarity">
    <text evidence="4">Belongs to the polysaccharide deacetylase family.</text>
</comment>
<reference key="1">
    <citation type="journal article" date="1996" name="Microbiology">
        <title>Sequencing of a 65 kb region of the Bacillus subtilis genome containing the lic and cel loci, and creation of a 177 kb contig covering the gnt-sacXY region.</title>
        <authorList>
            <person name="Yoshida K."/>
            <person name="Shindo K."/>
            <person name="Sano H."/>
            <person name="Seki S."/>
            <person name="Fujimura M."/>
            <person name="Yanai N."/>
            <person name="Miwa Y."/>
            <person name="Fujita Y."/>
        </authorList>
    </citation>
    <scope>NUCLEOTIDE SEQUENCE [GENOMIC DNA]</scope>
    <source>
        <strain>168 / BGSC1A1</strain>
    </source>
</reference>
<reference key="2">
    <citation type="journal article" date="1997" name="Nature">
        <title>The complete genome sequence of the Gram-positive bacterium Bacillus subtilis.</title>
        <authorList>
            <person name="Kunst F."/>
            <person name="Ogasawara N."/>
            <person name="Moszer I."/>
            <person name="Albertini A.M."/>
            <person name="Alloni G."/>
            <person name="Azevedo V."/>
            <person name="Bertero M.G."/>
            <person name="Bessieres P."/>
            <person name="Bolotin A."/>
            <person name="Borchert S."/>
            <person name="Borriss R."/>
            <person name="Boursier L."/>
            <person name="Brans A."/>
            <person name="Braun M."/>
            <person name="Brignell S.C."/>
            <person name="Bron S."/>
            <person name="Brouillet S."/>
            <person name="Bruschi C.V."/>
            <person name="Caldwell B."/>
            <person name="Capuano V."/>
            <person name="Carter N.M."/>
            <person name="Choi S.-K."/>
            <person name="Codani J.-J."/>
            <person name="Connerton I.F."/>
            <person name="Cummings N.J."/>
            <person name="Daniel R.A."/>
            <person name="Denizot F."/>
            <person name="Devine K.M."/>
            <person name="Duesterhoeft A."/>
            <person name="Ehrlich S.D."/>
            <person name="Emmerson P.T."/>
            <person name="Entian K.-D."/>
            <person name="Errington J."/>
            <person name="Fabret C."/>
            <person name="Ferrari E."/>
            <person name="Foulger D."/>
            <person name="Fritz C."/>
            <person name="Fujita M."/>
            <person name="Fujita Y."/>
            <person name="Fuma S."/>
            <person name="Galizzi A."/>
            <person name="Galleron N."/>
            <person name="Ghim S.-Y."/>
            <person name="Glaser P."/>
            <person name="Goffeau A."/>
            <person name="Golightly E.J."/>
            <person name="Grandi G."/>
            <person name="Guiseppi G."/>
            <person name="Guy B.J."/>
            <person name="Haga K."/>
            <person name="Haiech J."/>
            <person name="Harwood C.R."/>
            <person name="Henaut A."/>
            <person name="Hilbert H."/>
            <person name="Holsappel S."/>
            <person name="Hosono S."/>
            <person name="Hullo M.-F."/>
            <person name="Itaya M."/>
            <person name="Jones L.-M."/>
            <person name="Joris B."/>
            <person name="Karamata D."/>
            <person name="Kasahara Y."/>
            <person name="Klaerr-Blanchard M."/>
            <person name="Klein C."/>
            <person name="Kobayashi Y."/>
            <person name="Koetter P."/>
            <person name="Koningstein G."/>
            <person name="Krogh S."/>
            <person name="Kumano M."/>
            <person name="Kurita K."/>
            <person name="Lapidus A."/>
            <person name="Lardinois S."/>
            <person name="Lauber J."/>
            <person name="Lazarevic V."/>
            <person name="Lee S.-M."/>
            <person name="Levine A."/>
            <person name="Liu H."/>
            <person name="Masuda S."/>
            <person name="Mauel C."/>
            <person name="Medigue C."/>
            <person name="Medina N."/>
            <person name="Mellado R.P."/>
            <person name="Mizuno M."/>
            <person name="Moestl D."/>
            <person name="Nakai S."/>
            <person name="Noback M."/>
            <person name="Noone D."/>
            <person name="O'Reilly M."/>
            <person name="Ogawa K."/>
            <person name="Ogiwara A."/>
            <person name="Oudega B."/>
            <person name="Park S.-H."/>
            <person name="Parro V."/>
            <person name="Pohl T.M."/>
            <person name="Portetelle D."/>
            <person name="Porwollik S."/>
            <person name="Prescott A.M."/>
            <person name="Presecan E."/>
            <person name="Pujic P."/>
            <person name="Purnelle B."/>
            <person name="Rapoport G."/>
            <person name="Rey M."/>
            <person name="Reynolds S."/>
            <person name="Rieger M."/>
            <person name="Rivolta C."/>
            <person name="Rocha E."/>
            <person name="Roche B."/>
            <person name="Rose M."/>
            <person name="Sadaie Y."/>
            <person name="Sato T."/>
            <person name="Scanlan E."/>
            <person name="Schleich S."/>
            <person name="Schroeter R."/>
            <person name="Scoffone F."/>
            <person name="Sekiguchi J."/>
            <person name="Sekowska A."/>
            <person name="Seror S.J."/>
            <person name="Serror P."/>
            <person name="Shin B.-S."/>
            <person name="Soldo B."/>
            <person name="Sorokin A."/>
            <person name="Tacconi E."/>
            <person name="Takagi T."/>
            <person name="Takahashi H."/>
            <person name="Takemaru K."/>
            <person name="Takeuchi M."/>
            <person name="Tamakoshi A."/>
            <person name="Tanaka T."/>
            <person name="Terpstra P."/>
            <person name="Tognoni A."/>
            <person name="Tosato V."/>
            <person name="Uchiyama S."/>
            <person name="Vandenbol M."/>
            <person name="Vannier F."/>
            <person name="Vassarotti A."/>
            <person name="Viari A."/>
            <person name="Wambutt R."/>
            <person name="Wedler E."/>
            <person name="Wedler H."/>
            <person name="Weitzenegger T."/>
            <person name="Winters P."/>
            <person name="Wipat A."/>
            <person name="Yamamoto H."/>
            <person name="Yamane K."/>
            <person name="Yasumoto K."/>
            <person name="Yata K."/>
            <person name="Yoshida K."/>
            <person name="Yoshikawa H.-F."/>
            <person name="Zumstein E."/>
            <person name="Yoshikawa H."/>
            <person name="Danchin A."/>
        </authorList>
    </citation>
    <scope>NUCLEOTIDE SEQUENCE [LARGE SCALE GENOMIC DNA]</scope>
    <source>
        <strain>168</strain>
    </source>
</reference>